<keyword id="KW-0325">Glycoprotein</keyword>
<keyword id="KW-0349">Heme</keyword>
<keyword id="KW-0408">Iron</keyword>
<keyword id="KW-0472">Membrane</keyword>
<keyword id="KW-0479">Metal-binding</keyword>
<keyword id="KW-0503">Monooxygenase</keyword>
<keyword id="KW-0560">Oxidoreductase</keyword>
<keyword id="KW-1185">Reference proteome</keyword>
<keyword id="KW-0812">Transmembrane</keyword>
<keyword id="KW-1133">Transmembrane helix</keyword>
<name>AVNA_DOTSN</name>
<reference key="1">
    <citation type="journal article" date="2012" name="PLoS Genet.">
        <title>The genomes of the fungal plant pathogens Cladosporium fulvum and Dothistroma septosporum reveal adaptation to different hosts and lifestyles but also signatures of common ancestry.</title>
        <authorList>
            <person name="de Wit P.J.G.M."/>
            <person name="van der Burgt A."/>
            <person name="Oekmen B."/>
            <person name="Stergiopoulos I."/>
            <person name="Abd-Elsalam K.A."/>
            <person name="Aerts A.L."/>
            <person name="Bahkali A.H."/>
            <person name="Beenen H.G."/>
            <person name="Chettri P."/>
            <person name="Cox M.P."/>
            <person name="Datema E."/>
            <person name="de Vries R.P."/>
            <person name="Dhillon B."/>
            <person name="Ganley A.R."/>
            <person name="Griffiths S.A."/>
            <person name="Guo Y."/>
            <person name="Hamelin R.C."/>
            <person name="Henrissat B."/>
            <person name="Kabir M.S."/>
            <person name="Jashni M.K."/>
            <person name="Kema G."/>
            <person name="Klaubauf S."/>
            <person name="Lapidus A."/>
            <person name="Levasseur A."/>
            <person name="Lindquist E."/>
            <person name="Mehrabi R."/>
            <person name="Ohm R.A."/>
            <person name="Owen T.J."/>
            <person name="Salamov A."/>
            <person name="Schwelm A."/>
            <person name="Schijlen E."/>
            <person name="Sun H."/>
            <person name="van den Burg H.A."/>
            <person name="van Ham R.C.H.J."/>
            <person name="Zhang S."/>
            <person name="Goodwin S.B."/>
            <person name="Grigoriev I.V."/>
            <person name="Collemare J."/>
            <person name="Bradshaw R.E."/>
        </authorList>
    </citation>
    <scope>NUCLEOTIDE SEQUENCE [LARGE SCALE GENOMIC DNA]</scope>
    <source>
        <strain>NZE10 / CBS 128990</strain>
    </source>
</reference>
<reference key="2">
    <citation type="journal article" date="2012" name="PLoS Pathog.">
        <title>Diverse lifestyles and strategies of plant pathogenesis encoded in the genomes of eighteen Dothideomycetes fungi.</title>
        <authorList>
            <person name="Ohm R.A."/>
            <person name="Feau N."/>
            <person name="Henrissat B."/>
            <person name="Schoch C.L."/>
            <person name="Horwitz B.A."/>
            <person name="Barry K.W."/>
            <person name="Condon B.J."/>
            <person name="Copeland A.C."/>
            <person name="Dhillon B."/>
            <person name="Glaser F."/>
            <person name="Hesse C.N."/>
            <person name="Kosti I."/>
            <person name="LaButti K."/>
            <person name="Lindquist E.A."/>
            <person name="Lucas S."/>
            <person name="Salamov A.A."/>
            <person name="Bradshaw R.E."/>
            <person name="Ciuffetti L."/>
            <person name="Hamelin R.C."/>
            <person name="Kema G.H.J."/>
            <person name="Lawrence C."/>
            <person name="Scott J.A."/>
            <person name="Spatafora J.W."/>
            <person name="Turgeon B.G."/>
            <person name="de Wit P.J.G.M."/>
            <person name="Zhong S."/>
            <person name="Goodwin S.B."/>
            <person name="Grigoriev I.V."/>
        </authorList>
    </citation>
    <scope>NUCLEOTIDE SEQUENCE [LARGE SCALE GENOMIC DNA]</scope>
    <source>
        <strain>NZE10 / CBS 128990</strain>
    </source>
</reference>
<reference key="3">
    <citation type="journal article" date="2002" name="Appl. Environ. Microbiol.">
        <title>Dothistroma pini, a forest pathogen, contains homologs of aflatoxin biosynthetic pathway genes.</title>
        <authorList>
            <person name="Bradshaw R.E."/>
            <person name="Bhatnagar D."/>
            <person name="Ganley R.J."/>
            <person name="Gillman C.J."/>
            <person name="Monahan B.J."/>
            <person name="Seconi J.M."/>
        </authorList>
    </citation>
    <scope>FUNCTION</scope>
</reference>
<reference key="4">
    <citation type="journal article" date="2006" name="Mycopathologia">
        <title>A polyketide synthase gene required for biosynthesis of the aflatoxin-like toxin, dothistromin.</title>
        <authorList>
            <person name="Bradshaw R.E."/>
            <person name="Jin H."/>
            <person name="Morgan B.S."/>
            <person name="Schwelm A."/>
            <person name="Teddy O.R."/>
            <person name="Young C.A."/>
            <person name="Zhang S."/>
        </authorList>
    </citation>
    <scope>FUNCTION</scope>
</reference>
<reference key="5">
    <citation type="journal article" date="2007" name="Fungal Genet. Biol.">
        <title>A fragmented aflatoxin-like gene cluster in the forest pathogen Dothistroma septosporum.</title>
        <authorList>
            <person name="Zhang S."/>
            <person name="Schwelm A."/>
            <person name="Jin H."/>
            <person name="Collins L.J."/>
            <person name="Bradshaw R.E."/>
        </authorList>
    </citation>
    <scope>FUNCTION</scope>
    <scope>INDUCTION</scope>
</reference>
<reference key="6">
    <citation type="journal article" date="2010" name="Toxins">
        <title>Genetics of dothistromin biosynthesis of Dothistroma septosporum: an update.</title>
        <authorList>
            <person name="Schwelm A."/>
            <person name="Bradshaw R.E."/>
        </authorList>
    </citation>
    <scope>REVIEW ON FUNCTION</scope>
    <scope>PATHWAY</scope>
</reference>
<reference key="7">
    <citation type="journal article" date="2013" name="Fungal Genet. Biol.">
        <title>Dothistromin genes at multiple separate loci are regulated by AflR.</title>
        <authorList>
            <person name="Chettri P."/>
            <person name="Ehrlich K.C."/>
            <person name="Cary J.W."/>
            <person name="Collemare J."/>
            <person name="Cox M.P."/>
            <person name="Griffiths S.A."/>
            <person name="Olson M.A."/>
            <person name="de Wit P.J."/>
            <person name="Bradshaw R.E."/>
        </authorList>
    </citation>
    <scope>FUNCTION</scope>
    <scope>INDUCTION</scope>
    <scope>PATHWAY</scope>
</reference>
<reference key="8">
    <citation type="journal article" date="2013" name="New Phytol.">
        <title>Fragmentation of an aflatoxin-like gene cluster in a forest pathogen.</title>
        <authorList>
            <person name="Bradshaw R.E."/>
            <person name="Slot J.C."/>
            <person name="Moore G.G."/>
            <person name="Chettri P."/>
            <person name="de Wit P.J."/>
            <person name="Ehrlich K.C."/>
            <person name="Ganley A.R."/>
            <person name="Olson M.A."/>
            <person name="Rokas A."/>
            <person name="Carbone I."/>
            <person name="Cox M.P."/>
        </authorList>
    </citation>
    <scope>FUNCTION</scope>
</reference>
<evidence type="ECO:0000250" key="1">
    <source>
        <dbReference type="UniProtKB" id="P04798"/>
    </source>
</evidence>
<evidence type="ECO:0000250" key="2">
    <source>
        <dbReference type="UniProtKB" id="Q12732"/>
    </source>
</evidence>
<evidence type="ECO:0000255" key="3"/>
<evidence type="ECO:0000255" key="4">
    <source>
        <dbReference type="PROSITE-ProRule" id="PRU00498"/>
    </source>
</evidence>
<evidence type="ECO:0000269" key="5">
    <source>
    </source>
</evidence>
<evidence type="ECO:0000269" key="6">
    <source>
    </source>
</evidence>
<evidence type="ECO:0000269" key="7">
    <source>
    </source>
</evidence>
<evidence type="ECO:0000303" key="8">
    <source>
    </source>
</evidence>
<evidence type="ECO:0000303" key="9">
    <source>
    </source>
</evidence>
<evidence type="ECO:0000305" key="10"/>
<evidence type="ECO:0000305" key="11">
    <source>
    </source>
</evidence>
<evidence type="ECO:0000305" key="12">
    <source>
    </source>
</evidence>
<evidence type="ECO:0000305" key="13">
    <source>
    </source>
</evidence>
<dbReference type="EC" id="1.14.14.116" evidence="2"/>
<dbReference type="EMBL" id="KB446546">
    <property type="protein sequence ID" value="EME39031.1"/>
    <property type="molecule type" value="Genomic_DNA"/>
</dbReference>
<dbReference type="SMR" id="M2YJD1"/>
<dbReference type="STRING" id="675120.M2YJD1"/>
<dbReference type="GlyCosmos" id="M2YJD1">
    <property type="glycosylation" value="1 site, No reported glycans"/>
</dbReference>
<dbReference type="EnsemblFungi" id="EME39031">
    <property type="protein sequence ID" value="EME39031"/>
    <property type="gene ID" value="DOTSEDRAFT_57312"/>
</dbReference>
<dbReference type="eggNOG" id="KOG0158">
    <property type="taxonomic scope" value="Eukaryota"/>
</dbReference>
<dbReference type="HOGENOM" id="CLU_001570_14_11_1"/>
<dbReference type="OMA" id="SVNMQRQ"/>
<dbReference type="OrthoDB" id="1470350at2759"/>
<dbReference type="Proteomes" id="UP000016933">
    <property type="component" value="Unassembled WGS sequence"/>
</dbReference>
<dbReference type="GO" id="GO:0016020">
    <property type="term" value="C:membrane"/>
    <property type="evidence" value="ECO:0007669"/>
    <property type="project" value="UniProtKB-SubCell"/>
</dbReference>
<dbReference type="GO" id="GO:0140395">
    <property type="term" value="F:averantin hydroxylase activity"/>
    <property type="evidence" value="ECO:0007669"/>
    <property type="project" value="UniProtKB-EC"/>
</dbReference>
<dbReference type="GO" id="GO:0020037">
    <property type="term" value="F:heme binding"/>
    <property type="evidence" value="ECO:0007669"/>
    <property type="project" value="InterPro"/>
</dbReference>
<dbReference type="GO" id="GO:0005506">
    <property type="term" value="F:iron ion binding"/>
    <property type="evidence" value="ECO:0007669"/>
    <property type="project" value="InterPro"/>
</dbReference>
<dbReference type="GO" id="GO:0004497">
    <property type="term" value="F:monooxygenase activity"/>
    <property type="evidence" value="ECO:0007669"/>
    <property type="project" value="UniProtKB-KW"/>
</dbReference>
<dbReference type="CDD" id="cd11058">
    <property type="entry name" value="CYP60B-like"/>
    <property type="match status" value="1"/>
</dbReference>
<dbReference type="FunFam" id="1.10.630.10:FF:000047">
    <property type="entry name" value="Cytochrome P450 monooxygenase"/>
    <property type="match status" value="1"/>
</dbReference>
<dbReference type="Gene3D" id="1.10.630.10">
    <property type="entry name" value="Cytochrome P450"/>
    <property type="match status" value="1"/>
</dbReference>
<dbReference type="InterPro" id="IPR001128">
    <property type="entry name" value="Cyt_P450"/>
</dbReference>
<dbReference type="InterPro" id="IPR017972">
    <property type="entry name" value="Cyt_P450_CS"/>
</dbReference>
<dbReference type="InterPro" id="IPR002401">
    <property type="entry name" value="Cyt_P450_E_grp-I"/>
</dbReference>
<dbReference type="InterPro" id="IPR036396">
    <property type="entry name" value="Cyt_P450_sf"/>
</dbReference>
<dbReference type="InterPro" id="IPR050121">
    <property type="entry name" value="Cytochrome_P450_monoxygenase"/>
</dbReference>
<dbReference type="PANTHER" id="PTHR24305">
    <property type="entry name" value="CYTOCHROME P450"/>
    <property type="match status" value="1"/>
</dbReference>
<dbReference type="PANTHER" id="PTHR24305:SF210">
    <property type="entry name" value="CYTOCHROME P450 MONOOXYGENASE ASQL-RELATED"/>
    <property type="match status" value="1"/>
</dbReference>
<dbReference type="Pfam" id="PF00067">
    <property type="entry name" value="p450"/>
    <property type="match status" value="1"/>
</dbReference>
<dbReference type="PRINTS" id="PR00463">
    <property type="entry name" value="EP450I"/>
</dbReference>
<dbReference type="PRINTS" id="PR00385">
    <property type="entry name" value="P450"/>
</dbReference>
<dbReference type="SUPFAM" id="SSF48264">
    <property type="entry name" value="Cytochrome P450"/>
    <property type="match status" value="1"/>
</dbReference>
<dbReference type="PROSITE" id="PS00086">
    <property type="entry name" value="CYTOCHROME_P450"/>
    <property type="match status" value="1"/>
</dbReference>
<comment type="function">
    <text evidence="2 5 6 8 11 12 13">Averantin hydroxylase; part of the fragmented gene cluster that mediates the biosynthesis of dothistromin (DOTH), a polyketide toxin very similar in structure to the aflatoxin precursor, versicolorin B (PubMed:12039746, PubMed:17683963, PubMed:22069571, PubMed:23207690, PubMed:23448391). The first step of the pathway is the conversion of acetate to norsolorinic acid (NOR) and requires the fatty acid synthase subunits hexA and hexB, as well as the polyketide synthase pksA (PubMed:16649078, PubMed:23207690). PksA combines a hexanoyl starter unit and 7 malonyl-CoA extender units to synthesize the precursor NOR (By similarity). The hexanoyl starter unit is provided to the acyl-carrier protein (ACP) domain by the fungal fatty acid synthase hexA/hexB (By similarity). The second step is the conversion of NOR to averantin (AVN) and requires the norsolorinic acid ketoreductase nor1, which catalyzes the dehydration of norsolorinic acid to form (1'S)-averantin (PubMed:23207690). The cytochrome P450 monooxygenase avnA then catalyzes the hydroxylation of AVN to 5'hydroxyaverantin (HAVN) (PubMed:23207690). The next step is performed by adhA that transforms HAVN to averufin (AVF) (PubMed:23207690). Averufin might then be converted to hydroxyversicolorone by cypX and avfA (PubMed:23207690). Hydroxyversicolorone is further converted versiconal hemiacetal acetate (VHA) by moxY (PubMed:23207690). VHA is then the substrate for the versiconal hemiacetal acetate esterase est1 to yield versiconal (VAL) (PubMed:23207690). Versicolorin B synthase vbsA then converts VAL to versicolorin B (VERB) by closing the bisfuran ring (PubMed:16649078, PubMed:23207690). Then, the activity of the versicolorin B desaturase verB leads to versicolorin A (VERA) (PubMed:23207690). DotB, a predicted chloroperoxidase, may perform epoxidation of the A-ring of VERA (PubMed:23207690). Alternatively, a cytochrome P450, such as cypX or avnA could catalyze this step (PubMed:23207690). It is also possible that another, uncharacterized, cytochrome P450 enzyme is responsible for this step (PubMed:23207690). Opening of the epoxide could potentially be achieved by the epoxide hydrolase epoA (PubMed:23207690). However, epoA seems not to be required for DOTH biosynthesis, but other epoxide hydrolases may have the ability to complement this hydrolysis (PubMed:23207690). Alternatively, opening of the epoxide ring could be achieved non-enzymatically (PubMed:23207690). The next step is the deoxygenation of ring A to yield the 5,8-dihydroxyanthraquinone which is most likely catalyzed by the NADPH dehydrogenase encoded by ver1 (PubMed:23207690). The last stages of DOTH biosynthesis are proposed to involve hydroxylation of the bisfuran (PubMed:23207690). OrdB and norB might have oxidative roles here (PubMed:23207690). An alternative possibility is that cytochrome P450 monoogenases such as avnA and cypX might perform these steps in addition to previously proposed steps (PubMed:23207690).</text>
</comment>
<comment type="catalytic activity">
    <reaction evidence="2">
        <text>(1'S)-averantin + reduced [NADPH--hemoprotein reductase] + O2 = (1'S,5'R)-5'-hydroxyaverantin + oxidized [NADPH--hemoprotein reductase] + H2O</text>
        <dbReference type="Rhea" id="RHEA:35575"/>
        <dbReference type="Rhea" id="RHEA-COMP:11964"/>
        <dbReference type="Rhea" id="RHEA-COMP:11965"/>
        <dbReference type="ChEBI" id="CHEBI:15377"/>
        <dbReference type="ChEBI" id="CHEBI:15379"/>
        <dbReference type="ChEBI" id="CHEBI:57618"/>
        <dbReference type="ChEBI" id="CHEBI:58210"/>
        <dbReference type="ChEBI" id="CHEBI:71536"/>
        <dbReference type="ChEBI" id="CHEBI:77899"/>
        <dbReference type="EC" id="1.14.14.116"/>
    </reaction>
</comment>
<comment type="catalytic activity">
    <reaction evidence="2">
        <text>(1'S)-averantin + reduced [NADPH--hemoprotein reductase] + O2 = (1'S,5'S)-5'-hydroxyaverantin + oxidized [NADPH--hemoprotein reductase] + H2O + H(+)</text>
        <dbReference type="Rhea" id="RHEA:35571"/>
        <dbReference type="Rhea" id="RHEA-COMP:11964"/>
        <dbReference type="Rhea" id="RHEA-COMP:11965"/>
        <dbReference type="ChEBI" id="CHEBI:15377"/>
        <dbReference type="ChEBI" id="CHEBI:15378"/>
        <dbReference type="ChEBI" id="CHEBI:15379"/>
        <dbReference type="ChEBI" id="CHEBI:57618"/>
        <dbReference type="ChEBI" id="CHEBI:58210"/>
        <dbReference type="ChEBI" id="CHEBI:77899"/>
        <dbReference type="ChEBI" id="CHEBI:77900"/>
        <dbReference type="EC" id="1.14.14.116"/>
    </reaction>
</comment>
<comment type="cofactor">
    <cofactor evidence="1">
        <name>heme</name>
        <dbReference type="ChEBI" id="CHEBI:30413"/>
    </cofactor>
</comment>
<comment type="pathway">
    <text evidence="8 12">Mycotoxin biosynthesis.</text>
</comment>
<comment type="subcellular location">
    <subcellularLocation>
        <location evidence="3">Membrane</location>
        <topology evidence="3">Single-pass membrane protein</topology>
    </subcellularLocation>
</comment>
<comment type="induction">
    <text evidence="7">Expression is positively regulated by the dothistromin-specific transcription factor aflR (PubMed:23207690).</text>
</comment>
<comment type="similarity">
    <text evidence="10">Belongs to the cytochrome P450 family.</text>
</comment>
<sequence>MAPSSAQGLELLHGYLNLFTPRTGDVSFMRLVSGYVLATFVAGIGALLLWTLTTVFYRLYLHPLRRYPGPKLWAISRLPYIRSTVKGTIVHDFHRLHKQYGSVVRIAPDELSYSTPEATKVIYQSSPELHKDPMHLPPFHNGTPGILAAEEQHHRRYRRLLAYGFSDRGMRAQQPLIQRHIDLLVKRLSENSGKGSLDIVEWYNWCTFDIIGDLAFGESFGCLEESKTHEWIASIAGNVKAIPIINAIRRFKLDWVIPLIAPKKLLKMRQRNAQFTENKVDQRLSHGADRGDLWDGVMDPKGTKGGMSRQEMISNGSAIVLAGSETSSTLLSGCTWLLLQNPDVLAKLKEHVRGSFTDQSEIDLISVGKLDYMAAVLDEALRLYPPVPMQSNRIVNPGGADIAGQYVPAGTTVAVQQYAACRSSDNFRRPDEFLPQRWLEDPEFANDRRATSQPFSVGPRNCIGRQLAHAEMRLILAKILWHFDLELDAPKMGPRDWLSEQGVWILWDKSPLWVRLMPRTLEKSG</sequence>
<feature type="chain" id="PRO_0000443462" description="Averantin hydroxylase">
    <location>
        <begin position="1"/>
        <end position="525"/>
    </location>
</feature>
<feature type="transmembrane region" description="Helical" evidence="3">
    <location>
        <begin position="36"/>
        <end position="56"/>
    </location>
</feature>
<feature type="binding site" description="axial binding residue" evidence="1">
    <location>
        <position position="462"/>
    </location>
    <ligand>
        <name>heme</name>
        <dbReference type="ChEBI" id="CHEBI:30413"/>
    </ligand>
    <ligandPart>
        <name>Fe</name>
        <dbReference type="ChEBI" id="CHEBI:18248"/>
    </ligandPart>
</feature>
<feature type="glycosylation site" description="N-linked (GlcNAc...) asparagine" evidence="4">
    <location>
        <position position="315"/>
    </location>
</feature>
<protein>
    <recommendedName>
        <fullName evidence="2">Averantin hydroxylase</fullName>
        <ecNumber evidence="2">1.14.14.116</ecNumber>
    </recommendedName>
    <alternativeName>
        <fullName evidence="10">Cytochrome P450 monooxygenase avnA</fullName>
    </alternativeName>
    <alternativeName>
        <fullName evidence="9">Dothistromin biosynthesis protein avnA</fullName>
    </alternativeName>
</protein>
<accession>M2YJD1</accession>
<proteinExistence type="evidence at transcript level"/>
<organism>
    <name type="scientific">Dothistroma septosporum (strain NZE10 / CBS 128990)</name>
    <name type="common">Red band needle blight fungus</name>
    <name type="synonym">Mycosphaerella pini</name>
    <dbReference type="NCBI Taxonomy" id="675120"/>
    <lineage>
        <taxon>Eukaryota</taxon>
        <taxon>Fungi</taxon>
        <taxon>Dikarya</taxon>
        <taxon>Ascomycota</taxon>
        <taxon>Pezizomycotina</taxon>
        <taxon>Dothideomycetes</taxon>
        <taxon>Dothideomycetidae</taxon>
        <taxon>Mycosphaerellales</taxon>
        <taxon>Mycosphaerellaceae</taxon>
        <taxon>Dothistroma</taxon>
    </lineage>
</organism>
<gene>
    <name evidence="9" type="primary">avnA</name>
    <name type="ORF">DOTSEDRAFT_57312</name>
</gene>